<keyword id="KW-0067">ATP-binding</keyword>
<keyword id="KW-0375">Hydrogen ion transport</keyword>
<keyword id="KW-0406">Ion transport</keyword>
<keyword id="KW-0472">Membrane</keyword>
<keyword id="KW-0547">Nucleotide-binding</keyword>
<keyword id="KW-1185">Reference proteome</keyword>
<keyword id="KW-1278">Translocase</keyword>
<keyword id="KW-0813">Transport</keyword>
<keyword id="KW-0926">Vacuole</keyword>
<sequence>MAGALENARKEIKRISLEDHNENEYGQIYSVSGPVVVAENMVGCAMYELVKVGHHNLVGEVIRLDGDKATIQVYEETAGVTVGDPVLRTGKPLSVELGPGLMETIYDGIQRPLKAIKEQSQSIYIPRGVDAPALSREVKWAFKPGKLGVGDHISGGDIFGSIFENSLLEDHKILLPPRARGTITWIAPAGEYTVDETVLEVEFDGKKYSYSMFHTWPVRVPRPVTEKLSADYPLLTGQRVLDSLFPCVQGGTTCIPGAFGCGKTVISQSLSKYSNSDAIIYVGCGERGNEMAEVLMEFPELFTEVNGRKEPIMKRTTLVANTSNMPVAAREASIYTGITLAEYFRDQGKNVSMIADSSSRWAEALREISGRLGEMPADQGFPAYLGAKLASFYERAGKAVALGSPDRVGSVSIVAAVSPAGGDFSDPVTTSTLGITQVFWGLDKKLAQRKHFPSINTSVSYSKYTNVLNKYYDSNYPEFPVLRDRIKEILSNAEELEQVVQLVGKSALSDKDKIVLDVATLIKEDFLQQNGYSTYDAFCPIWKTYDMMKAFVSYFDEAQKSVSNGANWAVLSEATGDVKHAVSSSKFFEPSRGEREVHAEFEKLFASIQERFAESTD</sequence>
<evidence type="ECO:0000250" key="1">
    <source>
        <dbReference type="UniProtKB" id="P17255"/>
    </source>
</evidence>
<evidence type="ECO:0000255" key="2">
    <source>
        <dbReference type="PROSITE-ProRule" id="PRU00499"/>
    </source>
</evidence>
<evidence type="ECO:0000305" key="3"/>
<proteinExistence type="inferred from homology"/>
<reference key="1">
    <citation type="journal article" date="1999" name="J. Biol. Chem.">
        <title>Physiological consequence of disruption of the VMA1 gene in the riboflavin overproducer Ashbya gossypii.</title>
        <authorList>
            <person name="Foerster C."/>
            <person name="Santos M.A."/>
            <person name="Ruffert S."/>
            <person name="Kraemer R."/>
            <person name="Revuelta J.L."/>
        </authorList>
    </citation>
    <scope>NUCLEOTIDE SEQUENCE [GENOMIC DNA]</scope>
    <source>
        <strain>ATCC 10895 / CBS 109.51 / FGSC 9923 / NRRL Y-1056</strain>
    </source>
</reference>
<reference key="2">
    <citation type="journal article" date="2004" name="Science">
        <title>The Ashbya gossypii genome as a tool for mapping the ancient Saccharomyces cerevisiae genome.</title>
        <authorList>
            <person name="Dietrich F.S."/>
            <person name="Voegeli S."/>
            <person name="Brachat S."/>
            <person name="Lerch A."/>
            <person name="Gates K."/>
            <person name="Steiner S."/>
            <person name="Mohr C."/>
            <person name="Poehlmann R."/>
            <person name="Luedi P."/>
            <person name="Choi S."/>
            <person name="Wing R.A."/>
            <person name="Flavier A."/>
            <person name="Gaffney T.D."/>
            <person name="Philippsen P."/>
        </authorList>
    </citation>
    <scope>NUCLEOTIDE SEQUENCE [LARGE SCALE GENOMIC DNA]</scope>
    <source>
        <strain>ATCC 10895 / CBS 109.51 / FGSC 9923 / NRRL Y-1056</strain>
    </source>
</reference>
<reference key="3">
    <citation type="journal article" date="2013" name="G3 (Bethesda)">
        <title>Genomes of Ashbya fungi isolated from insects reveal four mating-type loci, numerous translocations, lack of transposons, and distinct gene duplications.</title>
        <authorList>
            <person name="Dietrich F.S."/>
            <person name="Voegeli S."/>
            <person name="Kuo S."/>
            <person name="Philippsen P."/>
        </authorList>
    </citation>
    <scope>GENOME REANNOTATION</scope>
    <scope>SEQUENCE REVISION TO 241</scope>
    <source>
        <strain>ATCC 10895 / CBS 109.51 / FGSC 9923 / NRRL Y-1056</strain>
    </source>
</reference>
<dbReference type="EC" id="7.1.2.2" evidence="1"/>
<dbReference type="EMBL" id="AJ009881">
    <property type="protein sequence ID" value="CAB51771.1"/>
    <property type="molecule type" value="Genomic_DNA"/>
</dbReference>
<dbReference type="EMBL" id="AE016817">
    <property type="protein sequence ID" value="AAS52022.2"/>
    <property type="molecule type" value="Genomic_DNA"/>
</dbReference>
<dbReference type="RefSeq" id="NP_984198.2">
    <property type="nucleotide sequence ID" value="NM_209551.2"/>
</dbReference>
<dbReference type="SMR" id="Q9UVJ8"/>
<dbReference type="FunCoup" id="Q9UVJ8">
    <property type="interactions" value="1186"/>
</dbReference>
<dbReference type="STRING" id="284811.Q9UVJ8"/>
<dbReference type="EnsemblFungi" id="AAS52022">
    <property type="protein sequence ID" value="AAS52022"/>
    <property type="gene ID" value="AGOS_ADR102W"/>
</dbReference>
<dbReference type="GeneID" id="4620347"/>
<dbReference type="KEGG" id="ago:AGOS_ADR102W"/>
<dbReference type="eggNOG" id="KOG1352">
    <property type="taxonomic scope" value="Eukaryota"/>
</dbReference>
<dbReference type="HOGENOM" id="CLU_008162_3_1_1"/>
<dbReference type="InParanoid" id="Q9UVJ8"/>
<dbReference type="OMA" id="RIVKTFW"/>
<dbReference type="OrthoDB" id="1676488at2759"/>
<dbReference type="Proteomes" id="UP000000591">
    <property type="component" value="Chromosome IV"/>
</dbReference>
<dbReference type="GO" id="GO:0000329">
    <property type="term" value="C:fungal-type vacuole membrane"/>
    <property type="evidence" value="ECO:0000318"/>
    <property type="project" value="GO_Central"/>
</dbReference>
<dbReference type="GO" id="GO:0000221">
    <property type="term" value="C:vacuolar proton-transporting V-type ATPase, V1 domain"/>
    <property type="evidence" value="ECO:0000250"/>
    <property type="project" value="UniProtKB"/>
</dbReference>
<dbReference type="GO" id="GO:0005524">
    <property type="term" value="F:ATP binding"/>
    <property type="evidence" value="ECO:0007669"/>
    <property type="project" value="UniProtKB-KW"/>
</dbReference>
<dbReference type="GO" id="GO:0016887">
    <property type="term" value="F:ATP hydrolysis activity"/>
    <property type="evidence" value="ECO:0007669"/>
    <property type="project" value="InterPro"/>
</dbReference>
<dbReference type="GO" id="GO:0046961">
    <property type="term" value="F:proton-transporting ATPase activity, rotational mechanism"/>
    <property type="evidence" value="ECO:0000318"/>
    <property type="project" value="GO_Central"/>
</dbReference>
<dbReference type="GO" id="GO:0046034">
    <property type="term" value="P:ATP metabolic process"/>
    <property type="evidence" value="ECO:0007669"/>
    <property type="project" value="InterPro"/>
</dbReference>
<dbReference type="GO" id="GO:0090465">
    <property type="term" value="P:intracellular arginine homeostasis"/>
    <property type="evidence" value="ECO:0007669"/>
    <property type="project" value="EnsemblFungi"/>
</dbReference>
<dbReference type="GO" id="GO:0090464">
    <property type="term" value="P:intracellular histidine homeostasis"/>
    <property type="evidence" value="ECO:0007669"/>
    <property type="project" value="EnsemblFungi"/>
</dbReference>
<dbReference type="GO" id="GO:0090463">
    <property type="term" value="P:intracellular lysine homeostasis"/>
    <property type="evidence" value="ECO:0007669"/>
    <property type="project" value="EnsemblFungi"/>
</dbReference>
<dbReference type="GO" id="GO:1902600">
    <property type="term" value="P:proton transmembrane transport"/>
    <property type="evidence" value="ECO:0000318"/>
    <property type="project" value="GO_Central"/>
</dbReference>
<dbReference type="GO" id="GO:0007035">
    <property type="term" value="P:vacuolar acidification"/>
    <property type="evidence" value="ECO:0007669"/>
    <property type="project" value="EnsemblFungi"/>
</dbReference>
<dbReference type="CDD" id="cd18111">
    <property type="entry name" value="ATP-synt_V_A-type_alpha_C"/>
    <property type="match status" value="1"/>
</dbReference>
<dbReference type="CDD" id="cd18119">
    <property type="entry name" value="ATP-synt_V_A-type_alpha_N"/>
    <property type="match status" value="1"/>
</dbReference>
<dbReference type="CDD" id="cd01134">
    <property type="entry name" value="V_A-ATPase_A"/>
    <property type="match status" value="1"/>
</dbReference>
<dbReference type="FunFam" id="2.40.30.20:FF:000002">
    <property type="entry name" value="V-type proton ATPase catalytic subunit A"/>
    <property type="match status" value="1"/>
</dbReference>
<dbReference type="FunFam" id="2.40.50.100:FF:000008">
    <property type="entry name" value="V-type proton ATPase catalytic subunit A"/>
    <property type="match status" value="1"/>
</dbReference>
<dbReference type="FunFam" id="3.40.50.300:FF:000052">
    <property type="entry name" value="V-type proton ATPase catalytic subunit A"/>
    <property type="match status" value="1"/>
</dbReference>
<dbReference type="FunFam" id="1.10.1140.10:FF:000003">
    <property type="entry name" value="Vacuolar ATP synthase catalytic subunit A"/>
    <property type="match status" value="1"/>
</dbReference>
<dbReference type="Gene3D" id="2.40.30.20">
    <property type="match status" value="1"/>
</dbReference>
<dbReference type="Gene3D" id="2.40.50.100">
    <property type="match status" value="1"/>
</dbReference>
<dbReference type="Gene3D" id="1.10.1140.10">
    <property type="entry name" value="Bovine Mitochondrial F1-atpase, Atp Synthase Beta Chain, Chain D, domain 3"/>
    <property type="match status" value="1"/>
</dbReference>
<dbReference type="Gene3D" id="3.40.50.300">
    <property type="entry name" value="P-loop containing nucleotide triphosphate hydrolases"/>
    <property type="match status" value="1"/>
</dbReference>
<dbReference type="HAMAP" id="MF_00309">
    <property type="entry name" value="ATP_synth_A_arch"/>
    <property type="match status" value="1"/>
</dbReference>
<dbReference type="InterPro" id="IPR055190">
    <property type="entry name" value="ATP-synt_VA_C"/>
</dbReference>
<dbReference type="InterPro" id="IPR031686">
    <property type="entry name" value="ATP-synth_a_Xtn"/>
</dbReference>
<dbReference type="InterPro" id="IPR023366">
    <property type="entry name" value="ATP_synth_asu-like_sf"/>
</dbReference>
<dbReference type="InterPro" id="IPR020003">
    <property type="entry name" value="ATPase_a/bsu_AS"/>
</dbReference>
<dbReference type="InterPro" id="IPR004100">
    <property type="entry name" value="ATPase_F1/V1/A1_a/bsu_N"/>
</dbReference>
<dbReference type="InterPro" id="IPR036121">
    <property type="entry name" value="ATPase_F1/V1/A1_a/bsu_N_sf"/>
</dbReference>
<dbReference type="InterPro" id="IPR000194">
    <property type="entry name" value="ATPase_F1/V1/A1_a/bsu_nucl-bd"/>
</dbReference>
<dbReference type="InterPro" id="IPR024034">
    <property type="entry name" value="ATPase_F1/V1_b/a_C"/>
</dbReference>
<dbReference type="InterPro" id="IPR005725">
    <property type="entry name" value="ATPase_V1-cplx_asu"/>
</dbReference>
<dbReference type="InterPro" id="IPR027417">
    <property type="entry name" value="P-loop_NTPase"/>
</dbReference>
<dbReference type="InterPro" id="IPR022878">
    <property type="entry name" value="V-ATPase_asu"/>
</dbReference>
<dbReference type="NCBIfam" id="NF003220">
    <property type="entry name" value="PRK04192.1"/>
    <property type="match status" value="1"/>
</dbReference>
<dbReference type="NCBIfam" id="TIGR01042">
    <property type="entry name" value="V-ATPase_V1_A"/>
    <property type="match status" value="1"/>
</dbReference>
<dbReference type="PANTHER" id="PTHR43607:SF1">
    <property type="entry name" value="H(+)-TRANSPORTING TWO-SECTOR ATPASE"/>
    <property type="match status" value="1"/>
</dbReference>
<dbReference type="PANTHER" id="PTHR43607">
    <property type="entry name" value="V-TYPE PROTON ATPASE CATALYTIC SUBUNIT A"/>
    <property type="match status" value="1"/>
</dbReference>
<dbReference type="Pfam" id="PF00006">
    <property type="entry name" value="ATP-synt_ab"/>
    <property type="match status" value="1"/>
</dbReference>
<dbReference type="Pfam" id="PF02874">
    <property type="entry name" value="ATP-synt_ab_N"/>
    <property type="match status" value="1"/>
</dbReference>
<dbReference type="Pfam" id="PF16886">
    <property type="entry name" value="ATP-synt_ab_Xtn"/>
    <property type="match status" value="1"/>
</dbReference>
<dbReference type="Pfam" id="PF22919">
    <property type="entry name" value="ATP-synt_VA_C"/>
    <property type="match status" value="1"/>
</dbReference>
<dbReference type="SUPFAM" id="SSF47917">
    <property type="entry name" value="C-terminal domain of alpha and beta subunits of F1 ATP synthase"/>
    <property type="match status" value="1"/>
</dbReference>
<dbReference type="SUPFAM" id="SSF50615">
    <property type="entry name" value="N-terminal domain of alpha and beta subunits of F1 ATP synthase"/>
    <property type="match status" value="1"/>
</dbReference>
<dbReference type="SUPFAM" id="SSF52540">
    <property type="entry name" value="P-loop containing nucleoside triphosphate hydrolases"/>
    <property type="match status" value="1"/>
</dbReference>
<dbReference type="PROSITE" id="PS00152">
    <property type="entry name" value="ATPASE_ALPHA_BETA"/>
    <property type="match status" value="1"/>
</dbReference>
<gene>
    <name type="primary">VMA1</name>
    <name type="ordered locus">ADR102W</name>
</gene>
<feature type="chain" id="PRO_0000144588" description="V-type proton ATPase catalytic subunit A">
    <location>
        <begin position="1"/>
        <end position="617"/>
    </location>
</feature>
<feature type="binding site" evidence="2">
    <location>
        <begin position="257"/>
        <end position="264"/>
    </location>
    <ligand>
        <name>ATP</name>
        <dbReference type="ChEBI" id="CHEBI:30616"/>
    </ligand>
</feature>
<comment type="function">
    <text evidence="1">Catalytic subunit of the V1 complex of vacuolar(H+)-ATPase (V-ATPase), a multisubunit enzyme composed of a peripheral complex (V1) that hydrolyzes ATP and a membrane integral complex (V0) that translocates protons (By similarity). V-ATPase is responsible for acidifying and maintaining the pH of intracellular compartments (By similarity).</text>
</comment>
<comment type="catalytic activity">
    <reaction evidence="1">
        <text>ATP + H2O + 4 H(+)(in) = ADP + phosphate + 5 H(+)(out)</text>
        <dbReference type="Rhea" id="RHEA:57720"/>
        <dbReference type="ChEBI" id="CHEBI:15377"/>
        <dbReference type="ChEBI" id="CHEBI:15378"/>
        <dbReference type="ChEBI" id="CHEBI:30616"/>
        <dbReference type="ChEBI" id="CHEBI:43474"/>
        <dbReference type="ChEBI" id="CHEBI:456216"/>
        <dbReference type="EC" id="7.1.2.2"/>
    </reaction>
</comment>
<comment type="subunit">
    <text evidence="1">V-ATPase is a heteromultimeric enzyme composed of a peripheral catalytic V1 complex (components A to H) attached to an integral membrane V0 proton pore complex (components: a, c, c', c'', d, e, f and VOA1).</text>
</comment>
<comment type="subcellular location">
    <subcellularLocation>
        <location evidence="1">Vacuole membrane</location>
        <topology evidence="1">Peripheral membrane protein</topology>
        <orientation evidence="1">Cytoplasmic side</orientation>
    </subcellularLocation>
</comment>
<comment type="similarity">
    <text evidence="3">Belongs to the ATPase alpha/beta chains family.</text>
</comment>
<accession>Q9UVJ8</accession>
<accession>Q75AG6</accession>
<name>VATA_EREGS</name>
<organism>
    <name type="scientific">Eremothecium gossypii (strain ATCC 10895 / CBS 109.51 / FGSC 9923 / NRRL Y-1056)</name>
    <name type="common">Yeast</name>
    <name type="synonym">Ashbya gossypii</name>
    <dbReference type="NCBI Taxonomy" id="284811"/>
    <lineage>
        <taxon>Eukaryota</taxon>
        <taxon>Fungi</taxon>
        <taxon>Dikarya</taxon>
        <taxon>Ascomycota</taxon>
        <taxon>Saccharomycotina</taxon>
        <taxon>Saccharomycetes</taxon>
        <taxon>Saccharomycetales</taxon>
        <taxon>Saccharomycetaceae</taxon>
        <taxon>Eremothecium</taxon>
    </lineage>
</organism>
<protein>
    <recommendedName>
        <fullName>V-type proton ATPase catalytic subunit A</fullName>
        <shortName>V-ATPase subunit A</shortName>
        <ecNumber evidence="1">7.1.2.2</ecNumber>
    </recommendedName>
    <alternativeName>
        <fullName>V-ATPase 69 kDa subunit</fullName>
    </alternativeName>
    <alternativeName>
        <fullName>Vacuolar proton pump subunit alpha</fullName>
    </alternativeName>
</protein>